<accession>Q08417</accession>
<accession>D6W2B5</accession>
<proteinExistence type="evidence at protein level"/>
<evidence type="ECO:0000255" key="1"/>
<evidence type="ECO:0000269" key="2">
    <source>
    </source>
</evidence>
<evidence type="ECO:0000269" key="3">
    <source>
    </source>
</evidence>
<evidence type="ECO:0000269" key="4">
    <source>
    </source>
</evidence>
<evidence type="ECO:0000305" key="5"/>
<evidence type="ECO:0000305" key="6">
    <source>
    </source>
</evidence>
<keyword id="KW-1003">Cell membrane</keyword>
<keyword id="KW-0325">Glycoprotein</keyword>
<keyword id="KW-0445">Lipid transport</keyword>
<keyword id="KW-0472">Membrane</keyword>
<keyword id="KW-1185">Reference proteome</keyword>
<keyword id="KW-0812">Transmembrane</keyword>
<keyword id="KW-1133">Transmembrane helix</keyword>
<keyword id="KW-0813">Transport</keyword>
<feature type="chain" id="PRO_0000262738" description="Sphingoid long-chain base transporter RSB1">
    <location>
        <begin position="1"/>
        <end position="382"/>
    </location>
</feature>
<feature type="topological domain" description="Extracellular" evidence="1">
    <location>
        <begin position="1"/>
        <end position="34"/>
    </location>
</feature>
<feature type="transmembrane region" description="Helical" evidence="1">
    <location>
        <begin position="35"/>
        <end position="55"/>
    </location>
</feature>
<feature type="topological domain" description="Cytoplasmic" evidence="1">
    <location>
        <begin position="56"/>
        <end position="57"/>
    </location>
</feature>
<feature type="transmembrane region" description="Helical" evidence="1">
    <location>
        <begin position="58"/>
        <end position="78"/>
    </location>
</feature>
<feature type="topological domain" description="Extracellular" evidence="1">
    <location>
        <begin position="79"/>
        <end position="90"/>
    </location>
</feature>
<feature type="transmembrane region" description="Helical" evidence="1">
    <location>
        <begin position="91"/>
        <end position="111"/>
    </location>
</feature>
<feature type="topological domain" description="Cytoplasmic" evidence="1">
    <location>
        <begin position="112"/>
        <end position="135"/>
    </location>
</feature>
<feature type="transmembrane region" description="Helical" evidence="1">
    <location>
        <begin position="136"/>
        <end position="156"/>
    </location>
</feature>
<feature type="topological domain" description="Extracellular" evidence="1">
    <location>
        <begin position="157"/>
        <end position="171"/>
    </location>
</feature>
<feature type="transmembrane region" description="Helical" evidence="1">
    <location>
        <begin position="172"/>
        <end position="192"/>
    </location>
</feature>
<feature type="topological domain" description="Cytoplasmic" evidence="1">
    <location>
        <begin position="193"/>
        <end position="241"/>
    </location>
</feature>
<feature type="transmembrane region" description="Helical" evidence="1">
    <location>
        <begin position="242"/>
        <end position="262"/>
    </location>
</feature>
<feature type="topological domain" description="Extracellular" evidence="1">
    <location>
        <begin position="263"/>
        <end position="281"/>
    </location>
</feature>
<feature type="transmembrane region" description="Helical" evidence="1">
    <location>
        <begin position="282"/>
        <end position="302"/>
    </location>
</feature>
<feature type="topological domain" description="Cytoplasmic" evidence="1">
    <location>
        <begin position="303"/>
        <end position="382"/>
    </location>
</feature>
<feature type="glycosylation site" description="N-linked (GlcNAc...) asparagine" evidence="4">
    <location>
        <position position="3"/>
    </location>
</feature>
<feature type="glycosylation site" description="N-linked (GlcNAc...) asparagine" evidence="4">
    <location>
        <position position="6"/>
    </location>
</feature>
<feature type="mutagenesis site" description="Increases sensitivity towards LCBs." evidence="4">
    <original>N</original>
    <variation>Q</variation>
    <location>
        <position position="3"/>
    </location>
</feature>
<feature type="mutagenesis site" description="Increases sensitivity towards LCBs." evidence="4">
    <original>N</original>
    <variation>Q</variation>
    <location>
        <position position="6"/>
    </location>
</feature>
<protein>
    <recommendedName>
        <fullName>Sphingoid long-chain base transporter RSB1</fullName>
    </recommendedName>
</protein>
<gene>
    <name type="primary">RSB1</name>
    <name type="ordered locus">YOR049C</name>
    <name type="ORF">O2787</name>
</gene>
<organism>
    <name type="scientific">Saccharomyces cerevisiae (strain ATCC 204508 / S288c)</name>
    <name type="common">Baker's yeast</name>
    <dbReference type="NCBI Taxonomy" id="559292"/>
    <lineage>
        <taxon>Eukaryota</taxon>
        <taxon>Fungi</taxon>
        <taxon>Dikarya</taxon>
        <taxon>Ascomycota</taxon>
        <taxon>Saccharomycotina</taxon>
        <taxon>Saccharomycetes</taxon>
        <taxon>Saccharomycetales</taxon>
        <taxon>Saccharomycetaceae</taxon>
        <taxon>Saccharomyces</taxon>
    </lineage>
</organism>
<sequence>MSNATNNTLGSLLPQLEAAANSNSLYGGMVPNLRFNITMIVIWGILLTIHVVQLLMRQYWFSIAFICTGILEVLGFIGRTWSHSNVADMDAFLLNMICLTIAPVFTMGGIYYQLAKLIEVYGHRFSLLPSPMAYSFIFICSDIVSLVVQAVGGGLCGVAVTDGTSTTTGNHVFIAGLAIQVASMAIFLMLWFHFLFRIYISVRWEHINSRPISLSLLKISQTEVDYLYREKFHFLRLEPKRWVFHYFNLAITVAVLTIFTRCCYRLAELVVGWDGYLITHEWYFIILDALMMAIATVTLTIFHPGFAFKGRSTSIPITPGHVDPETLPHTDDVEDILDTSDSKQFDIEKEEFQASMKYPISTFKQFMSKIANLFSSKKKAKL</sequence>
<name>RSB1_YEAST</name>
<reference key="1">
    <citation type="journal article" date="1997" name="Nature">
        <title>The nucleotide sequence of Saccharomyces cerevisiae chromosome XV.</title>
        <authorList>
            <person name="Dujon B."/>
            <person name="Albermann K."/>
            <person name="Aldea M."/>
            <person name="Alexandraki D."/>
            <person name="Ansorge W."/>
            <person name="Arino J."/>
            <person name="Benes V."/>
            <person name="Bohn C."/>
            <person name="Bolotin-Fukuhara M."/>
            <person name="Bordonne R."/>
            <person name="Boyer J."/>
            <person name="Camasses A."/>
            <person name="Casamayor A."/>
            <person name="Casas C."/>
            <person name="Cheret G."/>
            <person name="Cziepluch C."/>
            <person name="Daignan-Fornier B."/>
            <person name="Dang V.-D."/>
            <person name="de Haan M."/>
            <person name="Delius H."/>
            <person name="Durand P."/>
            <person name="Fairhead C."/>
            <person name="Feldmann H."/>
            <person name="Gaillon L."/>
            <person name="Galisson F."/>
            <person name="Gamo F.-J."/>
            <person name="Gancedo C."/>
            <person name="Goffeau A."/>
            <person name="Goulding S.E."/>
            <person name="Grivell L.A."/>
            <person name="Habbig B."/>
            <person name="Hand N.J."/>
            <person name="Hani J."/>
            <person name="Hattenhorst U."/>
            <person name="Hebling U."/>
            <person name="Hernando Y."/>
            <person name="Herrero E."/>
            <person name="Heumann K."/>
            <person name="Hiesel R."/>
            <person name="Hilger F."/>
            <person name="Hofmann B."/>
            <person name="Hollenberg C.P."/>
            <person name="Hughes B."/>
            <person name="Jauniaux J.-C."/>
            <person name="Kalogeropoulos A."/>
            <person name="Katsoulou C."/>
            <person name="Kordes E."/>
            <person name="Lafuente M.J."/>
            <person name="Landt O."/>
            <person name="Louis E.J."/>
            <person name="Maarse A.C."/>
            <person name="Madania A."/>
            <person name="Mannhaupt G."/>
            <person name="Marck C."/>
            <person name="Martin R.P."/>
            <person name="Mewes H.-W."/>
            <person name="Michaux G."/>
            <person name="Paces V."/>
            <person name="Parle-McDermott A.G."/>
            <person name="Pearson B.M."/>
            <person name="Perrin A."/>
            <person name="Pettersson B."/>
            <person name="Poch O."/>
            <person name="Pohl T.M."/>
            <person name="Poirey R."/>
            <person name="Portetelle D."/>
            <person name="Pujol A."/>
            <person name="Purnelle B."/>
            <person name="Ramezani Rad M."/>
            <person name="Rechmann S."/>
            <person name="Schwager C."/>
            <person name="Schweizer M."/>
            <person name="Sor F."/>
            <person name="Sterky F."/>
            <person name="Tarassov I.A."/>
            <person name="Teodoru C."/>
            <person name="Tettelin H."/>
            <person name="Thierry A."/>
            <person name="Tobiasch E."/>
            <person name="Tzermia M."/>
            <person name="Uhlen M."/>
            <person name="Unseld M."/>
            <person name="Valens M."/>
            <person name="Vandenbol M."/>
            <person name="Vetter I."/>
            <person name="Vlcek C."/>
            <person name="Voet M."/>
            <person name="Volckaert G."/>
            <person name="Voss H."/>
            <person name="Wambutt R."/>
            <person name="Wedler H."/>
            <person name="Wiemann S."/>
            <person name="Winsor B."/>
            <person name="Wolfe K.H."/>
            <person name="Zollner A."/>
            <person name="Zumstein E."/>
            <person name="Kleine K."/>
        </authorList>
    </citation>
    <scope>NUCLEOTIDE SEQUENCE [LARGE SCALE GENOMIC DNA]</scope>
    <source>
        <strain>ATCC 204508 / S288c</strain>
    </source>
</reference>
<reference key="2">
    <citation type="journal article" date="2014" name="G3 (Bethesda)">
        <title>The reference genome sequence of Saccharomyces cerevisiae: Then and now.</title>
        <authorList>
            <person name="Engel S.R."/>
            <person name="Dietrich F.S."/>
            <person name="Fisk D.G."/>
            <person name="Binkley G."/>
            <person name="Balakrishnan R."/>
            <person name="Costanzo M.C."/>
            <person name="Dwight S.S."/>
            <person name="Hitz B.C."/>
            <person name="Karra K."/>
            <person name="Nash R.S."/>
            <person name="Weng S."/>
            <person name="Wong E.D."/>
            <person name="Lloyd P."/>
            <person name="Skrzypek M.S."/>
            <person name="Miyasato S.R."/>
            <person name="Simison M."/>
            <person name="Cherry J.M."/>
        </authorList>
    </citation>
    <scope>GENOME REANNOTATION</scope>
    <source>
        <strain>ATCC 204508 / S288c</strain>
    </source>
</reference>
<reference key="3">
    <citation type="journal article" date="2002" name="J. Biol. Chem.">
        <title>Identification and characterization of a Saccharomyces cerevisiae gene, RSB1, involved in sphingoid long-chain base release.</title>
        <authorList>
            <person name="Kihara A."/>
            <person name="Igarashi Y."/>
        </authorList>
    </citation>
    <scope>FUNCTION</scope>
</reference>
<reference key="4">
    <citation type="journal article" date="2004" name="Mol. Biol. Cell">
        <title>Cross talk between sphingolipids and glycerophospholipids in the establishment of plasma membrane asymmetry.</title>
        <authorList>
            <person name="Kihara A."/>
            <person name="Igarashi Y."/>
        </authorList>
    </citation>
    <scope>INDUCTION</scope>
</reference>
<reference key="5">
    <citation type="journal article" date="2006" name="J. Biol. Chem.">
        <title>Long chain base tolerance in Saccharomyces cerevisiae is induced by retrograde signals from the mitochondria.</title>
        <authorList>
            <person name="Panwar S.L."/>
            <person name="Moye-Rowley W.S."/>
        </authorList>
    </citation>
    <scope>IDENTIFICATION OF FRAMESHIFT</scope>
    <scope>SUBCELLULAR LOCATION</scope>
    <scope>GLYCOSYLATION AT ASN-3 AND ASN-6</scope>
    <scope>INDUCTION</scope>
    <scope>MUTAGENESIS OF ASN-3 AND ASN-6</scope>
    <source>
        <strain>ATCC 96099 / S288c / SEY6210</strain>
    </source>
</reference>
<reference key="6">
    <citation type="journal article" date="2006" name="Proc. Natl. Acad. Sci. U.S.A.">
        <title>A global topology map of the Saccharomyces cerevisiae membrane proteome.</title>
        <authorList>
            <person name="Kim H."/>
            <person name="Melen K."/>
            <person name="Oesterberg M."/>
            <person name="von Heijne G."/>
        </authorList>
    </citation>
    <scope>TOPOLOGY [LARGE SCALE ANALYSIS]</scope>
    <source>
        <strain>ATCC 208353 / W303-1A</strain>
    </source>
</reference>
<reference key="7">
    <citation type="journal article" date="2013" name="PLoS ONE">
        <title>Transcriptional response to deletion of the phosphatidylserine decarboxylase Psd1p in the yeast Saccharomyces cerevisiae.</title>
        <authorList>
            <person name="Gsell M."/>
            <person name="Mascher G."/>
            <person name="Schuiki I."/>
            <person name="Ploier B."/>
            <person name="Hrastnik C."/>
            <person name="Daum G."/>
        </authorList>
    </citation>
    <scope>SUBCELLULAR LOCATION</scope>
</reference>
<comment type="function">
    <text evidence="2">Catalyzes the ATP-dependent translocation of sphingoid long-chain bases (LCBs) from the cytoplasmic site toward the extracytoplasmic side of the membrane (flip-flop). Involved in the establishment of the functional lipid asymmetry of the plasma membrane. Regulates intracellular levels of LCBs, sphingolipid precursors that are growth inhibitory at increased levels.</text>
</comment>
<comment type="subcellular location">
    <subcellularLocation>
        <location evidence="4 6">Cell membrane</location>
        <topology evidence="4">Multi-pass membrane protein</topology>
    </subcellularLocation>
</comment>
<comment type="induction">
    <text evidence="3 4">In response to loss of mitochondrial DNA in a transcription factor PDR3-dependent manner. Induced in response to altered glycerophospholipid asymmetry of the plasma membrane in a transcription factor PDR1-dependent manner.</text>
</comment>
<comment type="similarity">
    <text evidence="5">Belongs to the lipid-translocating exporter (LTE) (TC 9.A.26.1) family.</text>
</comment>
<comment type="sequence caution" evidence="5">
    <conflict type="frameshift">
        <sequence resource="EMBL-CDS" id="CAA99241"/>
    </conflict>
</comment>
<comment type="sequence caution" evidence="5">
    <conflict type="frameshift">
        <sequence resource="EMBL-CDS" id="DAA10831"/>
    </conflict>
</comment>
<dbReference type="EMBL" id="Z74957">
    <property type="protein sequence ID" value="CAA99241.1"/>
    <property type="status" value="ALT_FRAME"/>
    <property type="molecule type" value="Genomic_DNA"/>
</dbReference>
<dbReference type="EMBL" id="BK006948">
    <property type="protein sequence ID" value="DAA10831.1"/>
    <property type="status" value="ALT_FRAME"/>
    <property type="molecule type" value="Genomic_DNA"/>
</dbReference>
<dbReference type="PIR" id="S66923">
    <property type="entry name" value="S66923"/>
</dbReference>
<dbReference type="RefSeq" id="NP_014692.1">
    <property type="nucleotide sequence ID" value="NM_001183468.1"/>
</dbReference>
<dbReference type="BioGRID" id="34450">
    <property type="interactions" value="99"/>
</dbReference>
<dbReference type="DIP" id="DIP-3834N"/>
<dbReference type="FunCoup" id="Q08417">
    <property type="interactions" value="89"/>
</dbReference>
<dbReference type="MINT" id="Q08417"/>
<dbReference type="STRING" id="4932.YOR049C"/>
<dbReference type="SwissLipids" id="SLP:000000354"/>
<dbReference type="TCDB" id="9.A.26.1.2">
    <property type="family name" value="the lipid-translocating exporter (lte) family"/>
</dbReference>
<dbReference type="GlyCosmos" id="Q08417">
    <property type="glycosylation" value="2 sites, No reported glycans"/>
</dbReference>
<dbReference type="GlyGen" id="Q08417">
    <property type="glycosylation" value="2 sites"/>
</dbReference>
<dbReference type="iPTMnet" id="Q08417"/>
<dbReference type="PaxDb" id="4932-YOR049C"/>
<dbReference type="PeptideAtlas" id="Q08417"/>
<dbReference type="GeneID" id="854214"/>
<dbReference type="KEGG" id="sce:YOR049C"/>
<dbReference type="AGR" id="SGD:S000005575"/>
<dbReference type="SGD" id="S000005575">
    <property type="gene designation" value="RSB1"/>
</dbReference>
<dbReference type="eggNOG" id="ENOG502QU4U">
    <property type="taxonomic scope" value="Eukaryota"/>
</dbReference>
<dbReference type="HOGENOM" id="CLU_033465_6_3_1"/>
<dbReference type="InParanoid" id="Q08417"/>
<dbReference type="OrthoDB" id="3358017at2759"/>
<dbReference type="BioCyc" id="YEAST:G3O-33593-MONOMER"/>
<dbReference type="BioGRID-ORCS" id="854214">
    <property type="hits" value="3 hits in 10 CRISPR screens"/>
</dbReference>
<dbReference type="PRO" id="PR:Q08417"/>
<dbReference type="Proteomes" id="UP000002311">
    <property type="component" value="Chromosome XV"/>
</dbReference>
<dbReference type="RNAct" id="Q08417">
    <property type="molecule type" value="protein"/>
</dbReference>
<dbReference type="GO" id="GO:0071944">
    <property type="term" value="C:cell periphery"/>
    <property type="evidence" value="ECO:0000314"/>
    <property type="project" value="SGD"/>
</dbReference>
<dbReference type="GO" id="GO:0005783">
    <property type="term" value="C:endoplasmic reticulum"/>
    <property type="evidence" value="ECO:0000314"/>
    <property type="project" value="SGD"/>
</dbReference>
<dbReference type="GO" id="GO:0000324">
    <property type="term" value="C:fungal-type vacuole"/>
    <property type="evidence" value="ECO:0007005"/>
    <property type="project" value="SGD"/>
</dbReference>
<dbReference type="GO" id="GO:0016020">
    <property type="term" value="C:membrane"/>
    <property type="evidence" value="ECO:0000314"/>
    <property type="project" value="SGD"/>
</dbReference>
<dbReference type="GO" id="GO:0005886">
    <property type="term" value="C:plasma membrane"/>
    <property type="evidence" value="ECO:0000314"/>
    <property type="project" value="SGD"/>
</dbReference>
<dbReference type="GO" id="GO:0005324">
    <property type="term" value="F:long-chain fatty acid transmembrane transporter activity"/>
    <property type="evidence" value="ECO:0000314"/>
    <property type="project" value="SGD"/>
</dbReference>
<dbReference type="GO" id="GO:0045332">
    <property type="term" value="P:phospholipid translocation"/>
    <property type="evidence" value="ECO:0000315"/>
    <property type="project" value="SGD"/>
</dbReference>
<dbReference type="GO" id="GO:1905329">
    <property type="term" value="P:sphingoid long-chain base transport"/>
    <property type="evidence" value="ECO:0000314"/>
    <property type="project" value="SGD"/>
</dbReference>
<dbReference type="InterPro" id="IPR007568">
    <property type="entry name" value="RTA1"/>
</dbReference>
<dbReference type="PANTHER" id="PTHR31465">
    <property type="entry name" value="PROTEIN RTA1-RELATED"/>
    <property type="match status" value="1"/>
</dbReference>
<dbReference type="PANTHER" id="PTHR31465:SF9">
    <property type="entry name" value="SPHINGOID LONG-CHAIN BASE TRANSPORTER RSB1"/>
    <property type="match status" value="1"/>
</dbReference>
<dbReference type="Pfam" id="PF04479">
    <property type="entry name" value="RTA1"/>
    <property type="match status" value="1"/>
</dbReference>